<accession>A1WIF0</accession>
<proteinExistence type="inferred from homology"/>
<organism>
    <name type="scientific">Verminephrobacter eiseniae (strain EF01-2)</name>
    <dbReference type="NCBI Taxonomy" id="391735"/>
    <lineage>
        <taxon>Bacteria</taxon>
        <taxon>Pseudomonadati</taxon>
        <taxon>Pseudomonadota</taxon>
        <taxon>Betaproteobacteria</taxon>
        <taxon>Burkholderiales</taxon>
        <taxon>Comamonadaceae</taxon>
        <taxon>Verminephrobacter</taxon>
    </lineage>
</organism>
<name>PSD_VEREI</name>
<keyword id="KW-1003">Cell membrane</keyword>
<keyword id="KW-0210">Decarboxylase</keyword>
<keyword id="KW-0444">Lipid biosynthesis</keyword>
<keyword id="KW-0443">Lipid metabolism</keyword>
<keyword id="KW-0456">Lyase</keyword>
<keyword id="KW-0472">Membrane</keyword>
<keyword id="KW-0594">Phospholipid biosynthesis</keyword>
<keyword id="KW-1208">Phospholipid metabolism</keyword>
<keyword id="KW-0670">Pyruvate</keyword>
<keyword id="KW-1185">Reference proteome</keyword>
<keyword id="KW-0865">Zymogen</keyword>
<protein>
    <recommendedName>
        <fullName evidence="1">Phosphatidylserine decarboxylase proenzyme</fullName>
        <ecNumber evidence="1">4.1.1.65</ecNumber>
    </recommendedName>
    <component>
        <recommendedName>
            <fullName evidence="1">Phosphatidylserine decarboxylase alpha chain</fullName>
        </recommendedName>
    </component>
    <component>
        <recommendedName>
            <fullName evidence="1">Phosphatidylserine decarboxylase beta chain</fullName>
        </recommendedName>
    </component>
</protein>
<comment type="function">
    <text evidence="1">Catalyzes the formation of phosphatidylethanolamine (PtdEtn) from phosphatidylserine (PtdSer).</text>
</comment>
<comment type="catalytic activity">
    <reaction evidence="1">
        <text>a 1,2-diacyl-sn-glycero-3-phospho-L-serine + H(+) = a 1,2-diacyl-sn-glycero-3-phosphoethanolamine + CO2</text>
        <dbReference type="Rhea" id="RHEA:20828"/>
        <dbReference type="ChEBI" id="CHEBI:15378"/>
        <dbReference type="ChEBI" id="CHEBI:16526"/>
        <dbReference type="ChEBI" id="CHEBI:57262"/>
        <dbReference type="ChEBI" id="CHEBI:64612"/>
        <dbReference type="EC" id="4.1.1.65"/>
    </reaction>
</comment>
<comment type="cofactor">
    <cofactor evidence="1">
        <name>pyruvate</name>
        <dbReference type="ChEBI" id="CHEBI:15361"/>
    </cofactor>
    <text evidence="1">Binds 1 pyruvoyl group covalently per subunit.</text>
</comment>
<comment type="pathway">
    <text evidence="1">Phospholipid metabolism; phosphatidylethanolamine biosynthesis; phosphatidylethanolamine from CDP-diacylglycerol: step 2/2.</text>
</comment>
<comment type="subunit">
    <text evidence="1">Heterodimer of a large membrane-associated beta subunit and a small pyruvoyl-containing alpha subunit.</text>
</comment>
<comment type="subcellular location">
    <subcellularLocation>
        <location evidence="1">Cell membrane</location>
        <topology evidence="1">Peripheral membrane protein</topology>
    </subcellularLocation>
</comment>
<comment type="PTM">
    <text evidence="1">Is synthesized initially as an inactive proenzyme. Formation of the active enzyme involves a self-maturation process in which the active site pyruvoyl group is generated from an internal serine residue via an autocatalytic post-translational modification. Two non-identical subunits are generated from the proenzyme in this reaction, and the pyruvate is formed at the N-terminus of the alpha chain, which is derived from the carboxyl end of the proenzyme. The autoendoproteolytic cleavage occurs by a canonical serine protease mechanism, in which the side chain hydroxyl group of the serine supplies its oxygen atom to form the C-terminus of the beta chain, while the remainder of the serine residue undergoes an oxidative deamination to produce ammonia and the pyruvoyl prosthetic group on the alpha chain. During this reaction, the Ser that is part of the protease active site of the proenzyme becomes the pyruvoyl prosthetic group, which constitutes an essential element of the active site of the mature decarboxylase.</text>
</comment>
<comment type="similarity">
    <text evidence="1">Belongs to the phosphatidylserine decarboxylase family. PSD-B subfamily. Prokaryotic type I sub-subfamily.</text>
</comment>
<dbReference type="EC" id="4.1.1.65" evidence="1"/>
<dbReference type="EMBL" id="CP000542">
    <property type="protein sequence ID" value="ABM57407.1"/>
    <property type="molecule type" value="Genomic_DNA"/>
</dbReference>
<dbReference type="RefSeq" id="WP_011809414.1">
    <property type="nucleotide sequence ID" value="NC_008786.1"/>
</dbReference>
<dbReference type="SMR" id="A1WIF0"/>
<dbReference type="STRING" id="391735.Veis_1650"/>
<dbReference type="GeneID" id="76460260"/>
<dbReference type="KEGG" id="vei:Veis_1650"/>
<dbReference type="eggNOG" id="COG0688">
    <property type="taxonomic scope" value="Bacteria"/>
</dbReference>
<dbReference type="HOGENOM" id="CLU_029061_4_0_4"/>
<dbReference type="OrthoDB" id="9802030at2"/>
<dbReference type="UniPathway" id="UPA00558">
    <property type="reaction ID" value="UER00616"/>
</dbReference>
<dbReference type="Proteomes" id="UP000000374">
    <property type="component" value="Chromosome"/>
</dbReference>
<dbReference type="GO" id="GO:0005886">
    <property type="term" value="C:plasma membrane"/>
    <property type="evidence" value="ECO:0007669"/>
    <property type="project" value="UniProtKB-SubCell"/>
</dbReference>
<dbReference type="GO" id="GO:0004609">
    <property type="term" value="F:phosphatidylserine decarboxylase activity"/>
    <property type="evidence" value="ECO:0007669"/>
    <property type="project" value="UniProtKB-UniRule"/>
</dbReference>
<dbReference type="GO" id="GO:0006646">
    <property type="term" value="P:phosphatidylethanolamine biosynthetic process"/>
    <property type="evidence" value="ECO:0007669"/>
    <property type="project" value="UniProtKB-UniRule"/>
</dbReference>
<dbReference type="HAMAP" id="MF_00662">
    <property type="entry name" value="PS_decarb_PSD_B_type1"/>
    <property type="match status" value="1"/>
</dbReference>
<dbReference type="InterPro" id="IPR003817">
    <property type="entry name" value="PS_Dcarbxylase"/>
</dbReference>
<dbReference type="InterPro" id="IPR033177">
    <property type="entry name" value="PSD-B"/>
</dbReference>
<dbReference type="InterPro" id="IPR033178">
    <property type="entry name" value="PSD_type1_pro"/>
</dbReference>
<dbReference type="NCBIfam" id="TIGR00163">
    <property type="entry name" value="PS_decarb"/>
    <property type="match status" value="1"/>
</dbReference>
<dbReference type="PANTHER" id="PTHR10067">
    <property type="entry name" value="PHOSPHATIDYLSERINE DECARBOXYLASE"/>
    <property type="match status" value="1"/>
</dbReference>
<dbReference type="PANTHER" id="PTHR10067:SF6">
    <property type="entry name" value="PHOSPHATIDYLSERINE DECARBOXYLASE PROENZYME, MITOCHONDRIAL"/>
    <property type="match status" value="1"/>
</dbReference>
<dbReference type="Pfam" id="PF02666">
    <property type="entry name" value="PS_Dcarbxylase"/>
    <property type="match status" value="1"/>
</dbReference>
<reference key="1">
    <citation type="submission" date="2006-12" db="EMBL/GenBank/DDBJ databases">
        <title>Complete sequence of chromosome 1 of Verminephrobacter eiseniae EF01-2.</title>
        <authorList>
            <person name="Copeland A."/>
            <person name="Lucas S."/>
            <person name="Lapidus A."/>
            <person name="Barry K."/>
            <person name="Detter J.C."/>
            <person name="Glavina del Rio T."/>
            <person name="Dalin E."/>
            <person name="Tice H."/>
            <person name="Pitluck S."/>
            <person name="Chertkov O."/>
            <person name="Brettin T."/>
            <person name="Bruce D."/>
            <person name="Han C."/>
            <person name="Tapia R."/>
            <person name="Gilna P."/>
            <person name="Schmutz J."/>
            <person name="Larimer F."/>
            <person name="Land M."/>
            <person name="Hauser L."/>
            <person name="Kyrpides N."/>
            <person name="Kim E."/>
            <person name="Stahl D."/>
            <person name="Richardson P."/>
        </authorList>
    </citation>
    <scope>NUCLEOTIDE SEQUENCE [LARGE SCALE GENOMIC DNA]</scope>
    <source>
        <strain>EF01-2</strain>
    </source>
</reference>
<evidence type="ECO:0000255" key="1">
    <source>
        <dbReference type="HAMAP-Rule" id="MF_00662"/>
    </source>
</evidence>
<feature type="chain" id="PRO_1000026594" description="Phosphatidylserine decarboxylase beta chain" evidence="1">
    <location>
        <begin position="1"/>
        <end position="250"/>
    </location>
</feature>
<feature type="chain" id="PRO_1000026595" description="Phosphatidylserine decarboxylase alpha chain" evidence="1">
    <location>
        <begin position="251"/>
        <end position="286"/>
    </location>
</feature>
<feature type="active site" description="Charge relay system; for autoendoproteolytic cleavage activity" evidence="1">
    <location>
        <position position="88"/>
    </location>
</feature>
<feature type="active site" description="Charge relay system; for autoendoproteolytic cleavage activity" evidence="1">
    <location>
        <position position="145"/>
    </location>
</feature>
<feature type="active site" description="Charge relay system; for autoendoproteolytic cleavage activity" evidence="1">
    <location>
        <position position="251"/>
    </location>
</feature>
<feature type="active site" description="Schiff-base intermediate with substrate; via pyruvic acid; for decarboxylase activity" evidence="1">
    <location>
        <position position="251"/>
    </location>
</feature>
<feature type="site" description="Cleavage (non-hydrolytic); by autocatalysis" evidence="1">
    <location>
        <begin position="250"/>
        <end position="251"/>
    </location>
</feature>
<feature type="modified residue" description="Pyruvic acid (Ser); by autocatalysis" evidence="1">
    <location>
        <position position="251"/>
    </location>
</feature>
<gene>
    <name evidence="1" type="primary">psd</name>
    <name type="ordered locus">Veis_1650</name>
</gene>
<sequence>MPDRLAVLAQYALPKRALTTWAGKWASARLGGLTTALIRRFVARYDVNMAEAANPDMAGYASFNDFFTRALQPGARPLARADLICPVDGAISQFGRIGKDRIFQAKGHAYSTTALLGGDAAMAARFDDGHFATLYLSPRDYHRVHMPCAGELTRMVHVPGELFSVNPATACVVPGLFARNERVVCVFESAPGPGGPFALVLIGAAIVGSMATVWHGQVNPPRPGTLRQWDYAKGQVRLQQGQEMGRFLLGSTVVLLLPRGPLQFNPQWAPARPIMLGQAMAQRCAD</sequence>